<name>CE350_HUMAN</name>
<keyword id="KW-0002">3D-structure</keyword>
<keyword id="KW-0966">Cell projection</keyword>
<keyword id="KW-0175">Coiled coil</keyword>
<keyword id="KW-0963">Cytoplasm</keyword>
<keyword id="KW-0206">Cytoskeleton</keyword>
<keyword id="KW-0539">Nucleus</keyword>
<keyword id="KW-0597">Phosphoprotein</keyword>
<keyword id="KW-1267">Proteomics identification</keyword>
<keyword id="KW-1185">Reference proteome</keyword>
<gene>
    <name evidence="21" type="primary">CEP350</name>
    <name evidence="19" type="synonym">CAP350</name>
    <name type="synonym">KIAA0480</name>
    <name evidence="18" type="ORF">GM133</name>
</gene>
<feature type="chain" id="PRO_0000233291" description="Centrosome-associated protein 350">
    <location>
        <begin position="1"/>
        <end position="3117"/>
    </location>
</feature>
<feature type="domain" description="CAP-Gly" evidence="3">
    <location>
        <begin position="2517"/>
        <end position="2559"/>
    </location>
</feature>
<feature type="region of interest" description="Disordered" evidence="4">
    <location>
        <begin position="1"/>
        <end position="24"/>
    </location>
</feature>
<feature type="region of interest" description="Disordered" evidence="4">
    <location>
        <begin position="249"/>
        <end position="275"/>
    </location>
</feature>
<feature type="region of interest" description="Disordered" evidence="4">
    <location>
        <begin position="436"/>
        <end position="514"/>
    </location>
</feature>
<feature type="region of interest" description="Disordered" evidence="4">
    <location>
        <begin position="548"/>
        <end position="625"/>
    </location>
</feature>
<feature type="region of interest" description="Disordered" evidence="4">
    <location>
        <begin position="671"/>
        <end position="722"/>
    </location>
</feature>
<feature type="region of interest" description="Disordered" evidence="4">
    <location>
        <begin position="981"/>
        <end position="1002"/>
    </location>
</feature>
<feature type="region of interest" description="Disordered" evidence="4">
    <location>
        <begin position="1081"/>
        <end position="1298"/>
    </location>
</feature>
<feature type="region of interest" description="Disordered" evidence="4">
    <location>
        <begin position="1494"/>
        <end position="1674"/>
    </location>
</feature>
<feature type="region of interest" description="Disordered" evidence="4">
    <location>
        <begin position="1794"/>
        <end position="1854"/>
    </location>
</feature>
<feature type="region of interest" description="Disordered" evidence="4">
    <location>
        <begin position="1903"/>
        <end position="2020"/>
    </location>
</feature>
<feature type="region of interest" description="Disordered" evidence="4">
    <location>
        <begin position="2107"/>
        <end position="2221"/>
    </location>
</feature>
<feature type="region of interest" description="Disordered" evidence="4">
    <location>
        <begin position="2329"/>
        <end position="2356"/>
    </location>
</feature>
<feature type="region of interest" description="Disordered" evidence="4">
    <location>
        <begin position="2407"/>
        <end position="2432"/>
    </location>
</feature>
<feature type="region of interest" description="Disordered" evidence="4">
    <location>
        <begin position="2465"/>
        <end position="2485"/>
    </location>
</feature>
<feature type="coiled-coil region" evidence="2">
    <location>
        <begin position="598"/>
        <end position="645"/>
    </location>
</feature>
<feature type="coiled-coil region" evidence="2">
    <location>
        <begin position="1369"/>
        <end position="1411"/>
    </location>
</feature>
<feature type="coiled-coil region" evidence="2">
    <location>
        <begin position="1707"/>
        <end position="1800"/>
    </location>
</feature>
<feature type="coiled-coil region" evidence="2">
    <location>
        <begin position="1856"/>
        <end position="1899"/>
    </location>
</feature>
<feature type="coiled-coil region" evidence="2">
    <location>
        <begin position="2051"/>
        <end position="2110"/>
    </location>
</feature>
<feature type="coiled-coil region" evidence="2">
    <location>
        <begin position="2719"/>
        <end position="2752"/>
    </location>
</feature>
<feature type="compositionally biased region" description="Polar residues" evidence="4">
    <location>
        <begin position="14"/>
        <end position="24"/>
    </location>
</feature>
<feature type="compositionally biased region" description="Low complexity" evidence="4">
    <location>
        <begin position="255"/>
        <end position="267"/>
    </location>
</feature>
<feature type="compositionally biased region" description="Basic and acidic residues" evidence="4">
    <location>
        <begin position="469"/>
        <end position="501"/>
    </location>
</feature>
<feature type="compositionally biased region" description="Basic residues" evidence="4">
    <location>
        <begin position="563"/>
        <end position="573"/>
    </location>
</feature>
<feature type="compositionally biased region" description="Basic and acidic residues" evidence="4">
    <location>
        <begin position="591"/>
        <end position="625"/>
    </location>
</feature>
<feature type="compositionally biased region" description="Basic and acidic residues" evidence="4">
    <location>
        <begin position="694"/>
        <end position="703"/>
    </location>
</feature>
<feature type="compositionally biased region" description="Low complexity" evidence="4">
    <location>
        <begin position="705"/>
        <end position="718"/>
    </location>
</feature>
<feature type="compositionally biased region" description="Low complexity" evidence="4">
    <location>
        <begin position="981"/>
        <end position="992"/>
    </location>
</feature>
<feature type="compositionally biased region" description="Polar residues" evidence="4">
    <location>
        <begin position="1087"/>
        <end position="1102"/>
    </location>
</feature>
<feature type="compositionally biased region" description="Basic and acidic residues" evidence="4">
    <location>
        <begin position="1135"/>
        <end position="1144"/>
    </location>
</feature>
<feature type="compositionally biased region" description="Low complexity" evidence="4">
    <location>
        <begin position="1153"/>
        <end position="1172"/>
    </location>
</feature>
<feature type="compositionally biased region" description="Low complexity" evidence="4">
    <location>
        <begin position="1251"/>
        <end position="1267"/>
    </location>
</feature>
<feature type="compositionally biased region" description="Polar residues" evidence="4">
    <location>
        <begin position="1272"/>
        <end position="1283"/>
    </location>
</feature>
<feature type="compositionally biased region" description="Polar residues" evidence="4">
    <location>
        <begin position="1503"/>
        <end position="1512"/>
    </location>
</feature>
<feature type="compositionally biased region" description="Low complexity" evidence="4">
    <location>
        <begin position="1522"/>
        <end position="1535"/>
    </location>
</feature>
<feature type="compositionally biased region" description="Low complexity" evidence="4">
    <location>
        <begin position="1543"/>
        <end position="1556"/>
    </location>
</feature>
<feature type="compositionally biased region" description="Basic and acidic residues" evidence="4">
    <location>
        <begin position="1558"/>
        <end position="1571"/>
    </location>
</feature>
<feature type="compositionally biased region" description="Basic and acidic residues" evidence="4">
    <location>
        <begin position="1631"/>
        <end position="1647"/>
    </location>
</feature>
<feature type="compositionally biased region" description="Basic and acidic residues" evidence="4">
    <location>
        <begin position="1794"/>
        <end position="1815"/>
    </location>
</feature>
<feature type="compositionally biased region" description="Low complexity" evidence="4">
    <location>
        <begin position="1827"/>
        <end position="1841"/>
    </location>
</feature>
<feature type="compositionally biased region" description="Basic and acidic residues" evidence="4">
    <location>
        <begin position="1903"/>
        <end position="1925"/>
    </location>
</feature>
<feature type="compositionally biased region" description="Polar residues" evidence="4">
    <location>
        <begin position="1983"/>
        <end position="2005"/>
    </location>
</feature>
<feature type="compositionally biased region" description="Polar residues" evidence="4">
    <location>
        <begin position="2111"/>
        <end position="2129"/>
    </location>
</feature>
<feature type="compositionally biased region" description="Basic and acidic residues" evidence="4">
    <location>
        <begin position="2141"/>
        <end position="2170"/>
    </location>
</feature>
<feature type="compositionally biased region" description="Polar residues" evidence="4">
    <location>
        <begin position="2173"/>
        <end position="2184"/>
    </location>
</feature>
<feature type="compositionally biased region" description="Basic and acidic residues" evidence="4">
    <location>
        <begin position="2191"/>
        <end position="2201"/>
    </location>
</feature>
<feature type="compositionally biased region" description="Basic and acidic residues" evidence="4">
    <location>
        <begin position="2329"/>
        <end position="2338"/>
    </location>
</feature>
<feature type="compositionally biased region" description="Basic and acidic residues" evidence="4">
    <location>
        <begin position="2407"/>
        <end position="2417"/>
    </location>
</feature>
<feature type="compositionally biased region" description="Polar residues" evidence="4">
    <location>
        <begin position="2419"/>
        <end position="2432"/>
    </location>
</feature>
<feature type="compositionally biased region" description="Basic and acidic residues" evidence="4">
    <location>
        <begin position="2465"/>
        <end position="2478"/>
    </location>
</feature>
<feature type="modified residue" description="Phosphoserine" evidence="25">
    <location>
        <position position="86"/>
    </location>
</feature>
<feature type="modified residue" description="Phosphoserine" evidence="25">
    <location>
        <position position="139"/>
    </location>
</feature>
<feature type="modified residue" description="Phosphoserine" evidence="25">
    <location>
        <position position="142"/>
    </location>
</feature>
<feature type="modified residue" description="Phosphoserine" evidence="25">
    <location>
        <position position="218"/>
    </location>
</feature>
<feature type="modified residue" description="Phosphoserine" evidence="25">
    <location>
        <position position="473"/>
    </location>
</feature>
<feature type="modified residue" description="Phosphoserine" evidence="25">
    <location>
        <position position="507"/>
    </location>
</feature>
<feature type="modified residue" description="Phosphoserine" evidence="26">
    <location>
        <position position="695"/>
    </location>
</feature>
<feature type="modified residue" description="Phosphothreonine" evidence="23 25">
    <location>
        <position position="878"/>
    </location>
</feature>
<feature type="modified residue" description="Phosphoserine" evidence="25">
    <location>
        <position position="939"/>
    </location>
</feature>
<feature type="modified residue" description="Phosphoserine" evidence="24 25">
    <location>
        <position position="1061"/>
    </location>
</feature>
<feature type="modified residue" description="Phosphothreonine" evidence="23">
    <location>
        <position position="1253"/>
    </location>
</feature>
<feature type="modified residue" description="Phosphoserine" evidence="23">
    <location>
        <position position="1256"/>
    </location>
</feature>
<feature type="modified residue" description="Phosphoserine" evidence="23 25">
    <location>
        <position position="1259"/>
    </location>
</feature>
<feature type="modified residue" description="Phosphoserine" evidence="1">
    <location>
        <position position="1613"/>
    </location>
</feature>
<feature type="modified residue" description="Phosphoserine" evidence="25">
    <location>
        <position position="1648"/>
    </location>
</feature>
<feature type="modified residue" description="Phosphoserine" evidence="25">
    <location>
        <position position="1653"/>
    </location>
</feature>
<feature type="modified residue" description="Phosphoserine" evidence="25">
    <location>
        <position position="1818"/>
    </location>
</feature>
<feature type="modified residue" description="Phosphoserine" evidence="1">
    <location>
        <position position="1936"/>
    </location>
</feature>
<feature type="modified residue" description="Phosphoserine" evidence="25">
    <location>
        <position position="2115"/>
    </location>
</feature>
<feature type="modified residue" description="Phosphothreonine" evidence="23">
    <location>
        <position position="2204"/>
    </location>
</feature>
<feature type="modified residue" description="Phosphoserine" evidence="23 25">
    <location>
        <position position="2206"/>
    </location>
</feature>
<feature type="modified residue" description="Phosphoserine" evidence="1">
    <location>
        <position position="2431"/>
    </location>
</feature>
<feature type="modified residue" description="Phosphoserine" evidence="23 25">
    <location>
        <position position="2460"/>
    </location>
</feature>
<feature type="modified residue" description="Phosphothreonine" evidence="25">
    <location>
        <position position="2689"/>
    </location>
</feature>
<feature type="modified residue" description="Phosphoserine" evidence="1">
    <location>
        <position position="2830"/>
    </location>
</feature>
<feature type="modified residue" description="Phosphoserine" evidence="22">
    <location>
        <position position="2839"/>
    </location>
</feature>
<feature type="sequence variant" id="VAR_059202" description="In dbSNP:rs6692219.">
    <original>R</original>
    <variation>T</variation>
    <location>
        <position position="892"/>
    </location>
</feature>
<feature type="sequence variant" id="VAR_026126" description="In dbSNP:rs2477120." evidence="17">
    <original>E</original>
    <variation>Q</variation>
    <location>
        <position position="945"/>
    </location>
</feature>
<feature type="sequence variant" id="VAR_059203" description="In dbSNP:rs12125245.">
    <original>G</original>
    <variation>V</variation>
    <location>
        <position position="1213"/>
    </location>
</feature>
<feature type="sequence variant" id="VAR_048671" description="In dbSNP:rs16855164.">
    <original>T</original>
    <variation>A</variation>
    <location>
        <position position="1445"/>
    </location>
</feature>
<feature type="sequence variant" id="VAR_059204" description="In dbSNP:rs16855164.">
    <original>T</original>
    <variation>A</variation>
    <location>
        <position position="1446"/>
    </location>
</feature>
<feature type="sequence variant" id="VAR_059205" description="In dbSNP:rs12124336.">
    <original>S</original>
    <variation>A</variation>
    <location>
        <position position="1517"/>
    </location>
</feature>
<feature type="sequence variant" id="VAR_061092" description="In dbSNP:rs56173179.">
    <original>T</original>
    <variation>P</variation>
    <location>
        <position position="2044"/>
    </location>
</feature>
<feature type="mutagenesis site" description="Abolishes recruitment of PPARA to specific nuclear foci. No effect on interaction with PPARA (in vitro)." evidence="7">
    <original>LL</original>
    <variation>AA</variation>
    <location>
        <begin position="762"/>
        <end position="763"/>
    </location>
</feature>
<feature type="sequence conflict" description="In Ref. 3; AAL91355." evidence="20" ref="3">
    <location>
        <position position="25"/>
    </location>
</feature>
<feature type="sequence conflict" description="In Ref. 1; AAL55733." evidence="20" ref="1">
    <original>S</original>
    <variation>G</variation>
    <location>
        <position position="114"/>
    </location>
</feature>
<feature type="sequence conflict" description="In Ref. 1; AAL55733." evidence="20" ref="1">
    <original>E</original>
    <variation>R</variation>
    <location>
        <position position="459"/>
    </location>
</feature>
<feature type="sequence conflict" description="In Ref. 1; AAL55733." evidence="20" ref="1">
    <original>S</original>
    <variation>P</variation>
    <location>
        <position position="2164"/>
    </location>
</feature>
<feature type="strand" evidence="27">
    <location>
        <begin position="2483"/>
        <end position="2486"/>
    </location>
</feature>
<feature type="strand" evidence="27">
    <location>
        <begin position="2501"/>
        <end position="2505"/>
    </location>
</feature>
<feature type="turn" evidence="27">
    <location>
        <begin position="2506"/>
        <end position="2508"/>
    </location>
</feature>
<feature type="strand" evidence="27">
    <location>
        <begin position="2509"/>
        <end position="2518"/>
    </location>
</feature>
<feature type="strand" evidence="27">
    <location>
        <begin position="2520"/>
        <end position="2533"/>
    </location>
</feature>
<feature type="strand" evidence="27">
    <location>
        <begin position="2536"/>
        <end position="2538"/>
    </location>
</feature>
<feature type="strand" evidence="27">
    <location>
        <begin position="2540"/>
        <end position="2542"/>
    </location>
</feature>
<feature type="strand" evidence="27">
    <location>
        <begin position="2555"/>
        <end position="2558"/>
    </location>
</feature>
<feature type="helix" evidence="27">
    <location>
        <begin position="2560"/>
        <end position="2562"/>
    </location>
</feature>
<comment type="function">
    <text evidence="7 8 9 11 15">Plays an essential role in centriole growth by stabilizing a procentriolar seed composed of at least, SASS6 and CPAP (PubMed:19052644). Required for anchoring microtubules to the centrosomes and for the integrity of the microtubule network (PubMed:16314388, PubMed:17878239, PubMed:28659385). Recruits PPARA to discrete subcellular compartments and thereby modulates PPARA activity (PubMed:15615782). Required for ciliation (PubMed:28659385).</text>
</comment>
<comment type="subunit">
    <text evidence="1 7 8 9 10 12 13 14 15 16">Part of a ternary complex that contains CEP350, CEP43 and MAPRE1. Interacts (via C-terminus) directly with CEP43 (via N-terminus) (PubMed:16314388, PubMed:28428259, PubMed:28625565). Interacts with NR1H3, PPARA, PPARD and PPARG (PubMed:15615782). Interacts directly with microtubules (PubMed:17878239). Interacts with the fusion protein CEP43-FGFR1, and by doing so recruits and activates PI3K and PLC-gamma (PubMed:18412956). Interacts with CYLD (PubMed:25134987). Interacts with CFAP157 (By similarity). Interacts with CEP19 (via C-terminus) (PubMed:28659385). Interacts with CEP78; promoting CEP78 localization to centrosome and centriole (PubMed:36756949).</text>
</comment>
<comment type="interaction">
    <interactant intactId="EBI-947346">
        <id>Q5VT06</id>
    </interactant>
    <interactant intactId="EBI-701918">
        <id>P35221</id>
        <label>CTNNA1</label>
    </interactant>
    <organismsDiffer>false</organismsDiffer>
    <experiments>5</experiments>
</comment>
<comment type="subcellular location">
    <subcellularLocation>
        <location evidence="6 8 11 15">Cytoplasm</location>
        <location evidence="6 8 11 15">Cytoskeleton</location>
        <location evidence="6 8 11 15">Microtubule organizing center</location>
        <location evidence="6 8 11 15">Centrosome</location>
    </subcellularLocation>
    <subcellularLocation>
        <location evidence="8">Cytoplasm</location>
        <location evidence="8">Cytoskeleton</location>
        <location evidence="8">Spindle</location>
    </subcellularLocation>
    <subcellularLocation>
        <location evidence="7">Nucleus</location>
    </subcellularLocation>
    <subcellularLocation>
        <location evidence="14 15 16">Cytoplasm</location>
        <location evidence="14 15 16">Cytoskeleton</location>
        <location evidence="14 15 16">Microtubule organizing center</location>
        <location evidence="14 15 16">Centrosome</location>
        <location evidence="14 15 16">Centriole</location>
    </subcellularLocation>
    <subcellularLocation>
        <location evidence="15">Cytoplasm</location>
        <location evidence="15">Cytoskeleton</location>
        <location evidence="15">Cilium basal body</location>
    </subcellularLocation>
    <text evidence="7 8 9 14 15">Associated with mitotic spindles (PubMed:16314388). Nuclear, in discrete foci. Associated with intermediate filaments (PubMed:15615782). Also present in the pericentrosomal area (PubMed:17878239). Localizes on both mother and daughter centrioles. Localizes to an axial position on the mother centriole (PubMed:28625565). Localizes to the distal end of the centriole on the subdistal appendage region (PubMed:28659385).</text>
</comment>
<comment type="tissue specificity">
    <text evidence="5 7">Detected in heart, brain, skeletal muscle, testis, placenta, lung, liver, kidney and pancreas.</text>
</comment>
<comment type="PTM">
    <text evidence="8">Phosphorylated during mitosis.</text>
</comment>
<reference key="1">
    <citation type="submission" date="2000-07" db="EMBL/GenBank/DDBJ databases">
        <title>Cloning and characterization of a cDNA encoding a protein of 350 kDa (CAP350) associated with centrosomes.</title>
        <authorList>
            <person name="Klein-Hitpass L."/>
            <person name="Esser F."/>
            <person name="Michels D."/>
            <person name="Schwerk C."/>
            <person name="Vassen L."/>
        </authorList>
    </citation>
    <scope>NUCLEOTIDE SEQUENCE [MRNA]</scope>
    <scope>VARIANT GLN-945</scope>
</reference>
<reference key="2">
    <citation type="journal article" date="2006" name="Nature">
        <title>The DNA sequence and biological annotation of human chromosome 1.</title>
        <authorList>
            <person name="Gregory S.G."/>
            <person name="Barlow K.F."/>
            <person name="McLay K.E."/>
            <person name="Kaul R."/>
            <person name="Swarbreck D."/>
            <person name="Dunham A."/>
            <person name="Scott C.E."/>
            <person name="Howe K.L."/>
            <person name="Woodfine K."/>
            <person name="Spencer C.C.A."/>
            <person name="Jones M.C."/>
            <person name="Gillson C."/>
            <person name="Searle S."/>
            <person name="Zhou Y."/>
            <person name="Kokocinski F."/>
            <person name="McDonald L."/>
            <person name="Evans R."/>
            <person name="Phillips K."/>
            <person name="Atkinson A."/>
            <person name="Cooper R."/>
            <person name="Jones C."/>
            <person name="Hall R.E."/>
            <person name="Andrews T.D."/>
            <person name="Lloyd C."/>
            <person name="Ainscough R."/>
            <person name="Almeida J.P."/>
            <person name="Ambrose K.D."/>
            <person name="Anderson F."/>
            <person name="Andrew R.W."/>
            <person name="Ashwell R.I.S."/>
            <person name="Aubin K."/>
            <person name="Babbage A.K."/>
            <person name="Bagguley C.L."/>
            <person name="Bailey J."/>
            <person name="Beasley H."/>
            <person name="Bethel G."/>
            <person name="Bird C.P."/>
            <person name="Bray-Allen S."/>
            <person name="Brown J.Y."/>
            <person name="Brown A.J."/>
            <person name="Buckley D."/>
            <person name="Burton J."/>
            <person name="Bye J."/>
            <person name="Carder C."/>
            <person name="Chapman J.C."/>
            <person name="Clark S.Y."/>
            <person name="Clarke G."/>
            <person name="Clee C."/>
            <person name="Cobley V."/>
            <person name="Collier R.E."/>
            <person name="Corby N."/>
            <person name="Coville G.J."/>
            <person name="Davies J."/>
            <person name="Deadman R."/>
            <person name="Dunn M."/>
            <person name="Earthrowl M."/>
            <person name="Ellington A.G."/>
            <person name="Errington H."/>
            <person name="Frankish A."/>
            <person name="Frankland J."/>
            <person name="French L."/>
            <person name="Garner P."/>
            <person name="Garnett J."/>
            <person name="Gay L."/>
            <person name="Ghori M.R.J."/>
            <person name="Gibson R."/>
            <person name="Gilby L.M."/>
            <person name="Gillett W."/>
            <person name="Glithero R.J."/>
            <person name="Grafham D.V."/>
            <person name="Griffiths C."/>
            <person name="Griffiths-Jones S."/>
            <person name="Grocock R."/>
            <person name="Hammond S."/>
            <person name="Harrison E.S.I."/>
            <person name="Hart E."/>
            <person name="Haugen E."/>
            <person name="Heath P.D."/>
            <person name="Holmes S."/>
            <person name="Holt K."/>
            <person name="Howden P.J."/>
            <person name="Hunt A.R."/>
            <person name="Hunt S.E."/>
            <person name="Hunter G."/>
            <person name="Isherwood J."/>
            <person name="James R."/>
            <person name="Johnson C."/>
            <person name="Johnson D."/>
            <person name="Joy A."/>
            <person name="Kay M."/>
            <person name="Kershaw J.K."/>
            <person name="Kibukawa M."/>
            <person name="Kimberley A.M."/>
            <person name="King A."/>
            <person name="Knights A.J."/>
            <person name="Lad H."/>
            <person name="Laird G."/>
            <person name="Lawlor S."/>
            <person name="Leongamornlert D.A."/>
            <person name="Lloyd D.M."/>
            <person name="Loveland J."/>
            <person name="Lovell J."/>
            <person name="Lush M.J."/>
            <person name="Lyne R."/>
            <person name="Martin S."/>
            <person name="Mashreghi-Mohammadi M."/>
            <person name="Matthews L."/>
            <person name="Matthews N.S.W."/>
            <person name="McLaren S."/>
            <person name="Milne S."/>
            <person name="Mistry S."/>
            <person name="Moore M.J.F."/>
            <person name="Nickerson T."/>
            <person name="O'Dell C.N."/>
            <person name="Oliver K."/>
            <person name="Palmeiri A."/>
            <person name="Palmer S.A."/>
            <person name="Parker A."/>
            <person name="Patel D."/>
            <person name="Pearce A.V."/>
            <person name="Peck A.I."/>
            <person name="Pelan S."/>
            <person name="Phelps K."/>
            <person name="Phillimore B.J."/>
            <person name="Plumb R."/>
            <person name="Rajan J."/>
            <person name="Raymond C."/>
            <person name="Rouse G."/>
            <person name="Saenphimmachak C."/>
            <person name="Sehra H.K."/>
            <person name="Sheridan E."/>
            <person name="Shownkeen R."/>
            <person name="Sims S."/>
            <person name="Skuce C.D."/>
            <person name="Smith M."/>
            <person name="Steward C."/>
            <person name="Subramanian S."/>
            <person name="Sycamore N."/>
            <person name="Tracey A."/>
            <person name="Tromans A."/>
            <person name="Van Helmond Z."/>
            <person name="Wall M."/>
            <person name="Wallis J.M."/>
            <person name="White S."/>
            <person name="Whitehead S.L."/>
            <person name="Wilkinson J.E."/>
            <person name="Willey D.L."/>
            <person name="Williams H."/>
            <person name="Wilming L."/>
            <person name="Wray P.W."/>
            <person name="Wu Z."/>
            <person name="Coulson A."/>
            <person name="Vaudin M."/>
            <person name="Sulston J.E."/>
            <person name="Durbin R.M."/>
            <person name="Hubbard T."/>
            <person name="Wooster R."/>
            <person name="Dunham I."/>
            <person name="Carter N.P."/>
            <person name="McVean G."/>
            <person name="Ross M.T."/>
            <person name="Harrow J."/>
            <person name="Olson M.V."/>
            <person name="Beck S."/>
            <person name="Rogers J."/>
            <person name="Bentley D.R."/>
        </authorList>
    </citation>
    <scope>NUCLEOTIDE SEQUENCE [LARGE SCALE GENOMIC DNA]</scope>
</reference>
<reference key="3">
    <citation type="journal article" date="2002" name="Gene">
        <title>Identification of six novel genes by experimental validation of GeneMachine predicted genes.</title>
        <authorList>
            <person name="Makalowska I."/>
            <person name="Sood R."/>
            <person name="Faruque M.U."/>
            <person name="Hu P."/>
            <person name="Robbins C.M."/>
            <person name="Eddings E.M."/>
            <person name="Mestre J.D."/>
            <person name="Baxevanis A.D."/>
            <person name="Carpten J.D."/>
        </authorList>
    </citation>
    <scope>NUCLEOTIDE SEQUENCE [MRNA] OF 1-131</scope>
    <scope>IDENTIFICATION</scope>
    <scope>TISSUE SPECIFICITY</scope>
</reference>
<reference key="4">
    <citation type="journal article" date="2003" name="Nature">
        <title>Proteomic characterization of the human centrosome by protein correlation profiling.</title>
        <authorList>
            <person name="Andersen J.S."/>
            <person name="Wilkinson C.J."/>
            <person name="Mayor T."/>
            <person name="Mortensen P."/>
            <person name="Nigg E.A."/>
            <person name="Mann M."/>
        </authorList>
    </citation>
    <scope>IDENTIFICATION BY MASS SPECTROMETRY</scope>
    <scope>SUBCELLULAR LOCATION [LARGE SCALE ANALYSIS]</scope>
    <source>
        <tissue>Lymphoblast</tissue>
    </source>
</reference>
<reference key="5">
    <citation type="journal article" date="2005" name="J. Cell Sci.">
        <title>Activity and subcellular compartmentalization of peroxisome proliferator-activated receptor alpha are altered by the centrosome-associated protein CAP350.</title>
        <authorList>
            <person name="Patel H."/>
            <person name="Truant R."/>
            <person name="Rachubinski R.A."/>
            <person name="Capone J.P."/>
        </authorList>
    </citation>
    <scope>FUNCTION</scope>
    <scope>SUBCELLULAR LOCATION</scope>
    <scope>TISSUE SPECIFICITY</scope>
    <scope>MUTAGENESIS OF 762-LEU-LEU-763</scope>
    <scope>INTERACTION WITH NR1H3; PPARA; PPARD AND PPARG</scope>
</reference>
<reference key="6">
    <citation type="journal article" date="2006" name="Cell">
        <title>Global, in vivo, and site-specific phosphorylation dynamics in signaling networks.</title>
        <authorList>
            <person name="Olsen J.V."/>
            <person name="Blagoev B."/>
            <person name="Gnad F."/>
            <person name="Macek B."/>
            <person name="Kumar C."/>
            <person name="Mortensen P."/>
            <person name="Mann M."/>
        </authorList>
    </citation>
    <scope>PHOSPHORYLATION [LARGE SCALE ANALYSIS] AT SER-2839</scope>
    <scope>IDENTIFICATION BY MASS SPECTROMETRY [LARGE SCALE ANALYSIS]</scope>
    <source>
        <tissue>Cervix carcinoma</tissue>
    </source>
</reference>
<reference key="7">
    <citation type="journal article" date="2006" name="Mol. Biol. Cell">
        <title>A complex of two centrosomal proteins, CAP350 and FOP, cooperates with EB1 in microtubule anchoring.</title>
        <authorList>
            <person name="Yan X."/>
            <person name="Habedanck R."/>
            <person name="Nigg E.A."/>
        </authorList>
    </citation>
    <scope>FUNCTION</scope>
    <scope>SUBCELLULAR LOCATION</scope>
    <scope>PHOSPHORYLATION</scope>
    <scope>INTERACTION WITH CEP43</scope>
</reference>
<reference key="8">
    <citation type="journal article" date="2007" name="J. Cell Sci.">
        <title>Centrosomal CAP350 protein stabilises microtubules associated with the Golgi complex.</title>
        <authorList>
            <person name="Hoppeler-Lebel A."/>
            <person name="Celati C."/>
            <person name="Bellett G."/>
            <person name="Mogensen M.M."/>
            <person name="Klein-Hitpass L."/>
            <person name="Bornens M."/>
            <person name="Tassin A.-M."/>
        </authorList>
    </citation>
    <scope>FUNCTION</scope>
    <scope>SUBCELLULAR LOCATION</scope>
    <scope>INTERACTION WITH MICROTUBULE</scope>
</reference>
<reference key="9">
    <citation type="journal article" date="2008" name="Mol. Cancer">
        <title>Myeloproliferative disorder FOP-FGFR1 fusion kinase recruits phosphoinositide-3 kinase and phospholipase Cgamma at the centrosome.</title>
        <authorList>
            <person name="Lelievre H."/>
            <person name="Chevrier V."/>
            <person name="Tassin A.-M."/>
            <person name="Birnbaum D."/>
        </authorList>
    </citation>
    <scope>INTERACTION WITH CEP43-FGFR1 FUSION PROTEIN</scope>
</reference>
<reference key="10">
    <citation type="journal article" date="2008" name="PLoS ONE">
        <title>Role of CAP350 in centriolar tubule stability and centriole assembly.</title>
        <authorList>
            <person name="Le Clech M."/>
        </authorList>
    </citation>
    <scope>FUNCTION</scope>
    <scope>SUBCELLULAR LOCATION</scope>
</reference>
<reference key="11">
    <citation type="journal article" date="2008" name="Proc. Natl. Acad. Sci. U.S.A.">
        <title>A quantitative atlas of mitotic phosphorylation.</title>
        <authorList>
            <person name="Dephoure N."/>
            <person name="Zhou C."/>
            <person name="Villen J."/>
            <person name="Beausoleil S.A."/>
            <person name="Bakalarski C.E."/>
            <person name="Elledge S.J."/>
            <person name="Gygi S.P."/>
        </authorList>
    </citation>
    <scope>PHOSPHORYLATION [LARGE SCALE ANALYSIS] AT THR-878; THR-1253; SER-1256; SER-1259; THR-2204; SER-2206 AND SER-2460</scope>
    <scope>IDENTIFICATION BY MASS SPECTROMETRY [LARGE SCALE ANALYSIS]</scope>
    <source>
        <tissue>Cervix carcinoma</tissue>
    </source>
</reference>
<reference key="12">
    <citation type="journal article" date="2009" name="Anal. Chem.">
        <title>Lys-N and trypsin cover complementary parts of the phosphoproteome in a refined SCX-based approach.</title>
        <authorList>
            <person name="Gauci S."/>
            <person name="Helbig A.O."/>
            <person name="Slijper M."/>
            <person name="Krijgsveld J."/>
            <person name="Heck A.J."/>
            <person name="Mohammed S."/>
        </authorList>
    </citation>
    <scope>IDENTIFICATION BY MASS SPECTROMETRY [LARGE SCALE ANALYSIS]</scope>
</reference>
<reference key="13">
    <citation type="journal article" date="2010" name="Sci. Signal.">
        <title>Quantitative phosphoproteomics reveals widespread full phosphorylation site occupancy during mitosis.</title>
        <authorList>
            <person name="Olsen J.V."/>
            <person name="Vermeulen M."/>
            <person name="Santamaria A."/>
            <person name="Kumar C."/>
            <person name="Miller M.L."/>
            <person name="Jensen L.J."/>
            <person name="Gnad F."/>
            <person name="Cox J."/>
            <person name="Jensen T.S."/>
            <person name="Nigg E.A."/>
            <person name="Brunak S."/>
            <person name="Mann M."/>
        </authorList>
    </citation>
    <scope>PHOSPHORYLATION [LARGE SCALE ANALYSIS] AT SER-1061</scope>
    <scope>IDENTIFICATION BY MASS SPECTROMETRY [LARGE SCALE ANALYSIS]</scope>
    <source>
        <tissue>Cervix carcinoma</tissue>
    </source>
</reference>
<reference key="14">
    <citation type="journal article" date="2011" name="BMC Syst. Biol.">
        <title>Initial characterization of the human central proteome.</title>
        <authorList>
            <person name="Burkard T.R."/>
            <person name="Planyavsky M."/>
            <person name="Kaupe I."/>
            <person name="Breitwieser F.P."/>
            <person name="Buerckstuemmer T."/>
            <person name="Bennett K.L."/>
            <person name="Superti-Furga G."/>
            <person name="Colinge J."/>
        </authorList>
    </citation>
    <scope>IDENTIFICATION BY MASS SPECTROMETRY [LARGE SCALE ANALYSIS]</scope>
</reference>
<reference key="15">
    <citation type="journal article" date="2013" name="J. Proteome Res.">
        <title>Toward a comprehensive characterization of a human cancer cell phosphoproteome.</title>
        <authorList>
            <person name="Zhou H."/>
            <person name="Di Palma S."/>
            <person name="Preisinger C."/>
            <person name="Peng M."/>
            <person name="Polat A.N."/>
            <person name="Heck A.J."/>
            <person name="Mohammed S."/>
        </authorList>
    </citation>
    <scope>PHOSPHORYLATION [LARGE SCALE ANALYSIS] AT SER-86; SER-139; SER-142; SER-218; SER-473; SER-507; THR-878; SER-939; SER-1061; SER-1259; SER-1648; SER-1653; SER-1818; SER-2115; SER-2206; SER-2460 AND THR-2689</scope>
    <scope>IDENTIFICATION BY MASS SPECTROMETRY [LARGE SCALE ANALYSIS]</scope>
    <source>
        <tissue>Cervix carcinoma</tissue>
        <tissue>Erythroleukemia</tissue>
    </source>
</reference>
<reference key="16">
    <citation type="journal article" date="2014" name="J. Proteomics">
        <title>An enzyme assisted RP-RPLC approach for in-depth analysis of human liver phosphoproteome.</title>
        <authorList>
            <person name="Bian Y."/>
            <person name="Song C."/>
            <person name="Cheng K."/>
            <person name="Dong M."/>
            <person name="Wang F."/>
            <person name="Huang J."/>
            <person name="Sun D."/>
            <person name="Wang L."/>
            <person name="Ye M."/>
            <person name="Zou H."/>
        </authorList>
    </citation>
    <scope>PHOSPHORYLATION [LARGE SCALE ANALYSIS] AT SER-695</scope>
    <scope>IDENTIFICATION BY MASS SPECTROMETRY [LARGE SCALE ANALYSIS]</scope>
    <source>
        <tissue>Liver</tissue>
    </source>
</reference>
<reference key="17">
    <citation type="journal article" date="2014" name="Nat. Commun.">
        <title>The deubiquitinating enzyme CYLD controls apical docking of basal bodies in ciliated epithelial cells.</title>
        <authorList>
            <person name="Eguether T."/>
            <person name="Ermolaeva M.A."/>
            <person name="Zhao Y."/>
            <person name="Bonnet M.C."/>
            <person name="Jain A."/>
            <person name="Pasparakis M."/>
            <person name="Courtois G."/>
            <person name="Tassin A.M."/>
        </authorList>
    </citation>
    <scope>INTERACTION WITH CYLD</scope>
</reference>
<reference key="18">
    <citation type="journal article" date="2017" name="Dev. Cell">
        <title>The CEP19-RABL2 GTPase complex binds IFT-B to initiate intraflagellar transport at the ciliary base.</title>
        <authorList>
            <person name="Kanie T."/>
            <person name="Abbott K.L."/>
            <person name="Mooney N.A."/>
            <person name="Plowey E.D."/>
            <person name="Demeter J."/>
            <person name="Jackson P.K."/>
        </authorList>
    </citation>
    <scope>INTERACTION WITH CEP43</scope>
    <scope>SUBCELLULAR LOCATION</scope>
    <scope>PHYLOGENETIC ANALYSIS</scope>
</reference>
<reference key="19">
    <citation type="journal article" date="2017" name="Mol. Biol. Cell">
        <title>RABL2 interacts with the intraflagellar transport-B complex and CEP19 and participates in ciliary assembly.</title>
        <authorList>
            <person name="Nishijima Y."/>
            <person name="Hagiya Y."/>
            <person name="Kubo T."/>
            <person name="Takei R."/>
            <person name="Katoh Y."/>
            <person name="Nakayama K."/>
        </authorList>
    </citation>
    <scope>INTERACTION WITH CEP43</scope>
</reference>
<reference key="20">
    <citation type="journal article" date="2017" name="Open Biol.">
        <title>CEP19 cooperates with FOP and CEP350 to drive early steps in the ciliogenesis programme.</title>
        <authorList>
            <person name="Mojarad B.A."/>
            <person name="Gupta G.D."/>
            <person name="Hasegan M."/>
            <person name="Goudiam O."/>
            <person name="Basto R."/>
            <person name="Gingras A.C."/>
            <person name="Pelletier L."/>
        </authorList>
    </citation>
    <scope>FUNCTION</scope>
    <scope>INTERACTION WITH CEP19</scope>
    <scope>SUBCELLULAR LOCATION</scope>
</reference>
<reference key="21">
    <citation type="journal article" date="2023" name="Elife">
        <title>Absence of CEP78 causes photoreceptor and sperm flagella impairments in mice and a human individual.</title>
        <authorList>
            <person name="Zhu T."/>
            <person name="Zhang Y."/>
            <person name="Sheng X."/>
            <person name="Zhang X."/>
            <person name="Chen Y."/>
            <person name="Zhu H."/>
            <person name="Guo Y."/>
            <person name="Qi Y."/>
            <person name="Zhao Y."/>
            <person name="Zhou Q."/>
            <person name="Chen X."/>
            <person name="Guo X."/>
            <person name="Zhao C."/>
        </authorList>
    </citation>
    <scope>SUBCELLULAR LOCATION</scope>
    <scope>INTERACTION WITH CEP78</scope>
</reference>
<reference key="22">
    <citation type="submission" date="2005-11" db="PDB data bank">
        <title>Solution structure of the CAP-Gly domain in human centrosome-associated protein CAP350.</title>
        <authorList>
            <consortium name="RIKEN structural genomics initiative (RSGI)"/>
        </authorList>
    </citation>
    <scope>STRUCTURE BY NMR OF 2473-2581</scope>
</reference>
<dbReference type="EMBL" id="AF287356">
    <property type="protein sequence ID" value="AAL55733.1"/>
    <property type="molecule type" value="mRNA"/>
</dbReference>
<dbReference type="EMBL" id="AL645487">
    <property type="status" value="NOT_ANNOTATED_CDS"/>
    <property type="molecule type" value="Genomic_DNA"/>
</dbReference>
<dbReference type="EMBL" id="AL590632">
    <property type="status" value="NOT_ANNOTATED_CDS"/>
    <property type="molecule type" value="Genomic_DNA"/>
</dbReference>
<dbReference type="EMBL" id="AL390718">
    <property type="status" value="NOT_ANNOTATED_CDS"/>
    <property type="molecule type" value="Genomic_DNA"/>
</dbReference>
<dbReference type="EMBL" id="AF387614">
    <property type="protein sequence ID" value="AAL91355.1"/>
    <property type="molecule type" value="mRNA"/>
</dbReference>
<dbReference type="CCDS" id="CCDS1336.1"/>
<dbReference type="PIR" id="T00263">
    <property type="entry name" value="T00263"/>
</dbReference>
<dbReference type="RefSeq" id="NP_055625.4">
    <property type="nucleotide sequence ID" value="NM_014810.4"/>
</dbReference>
<dbReference type="RefSeq" id="XP_047291362.1">
    <property type="nucleotide sequence ID" value="XM_047435406.1"/>
</dbReference>
<dbReference type="PDB" id="2COZ">
    <property type="method" value="NMR"/>
    <property type="chains" value="A=2473-2581"/>
</dbReference>
<dbReference type="PDBsum" id="2COZ"/>
<dbReference type="SMR" id="Q5VT06"/>
<dbReference type="BioGRID" id="115191">
    <property type="interactions" value="175"/>
</dbReference>
<dbReference type="CORUM" id="Q5VT06"/>
<dbReference type="DIP" id="DIP-49946N"/>
<dbReference type="FunCoup" id="Q5VT06">
    <property type="interactions" value="1887"/>
</dbReference>
<dbReference type="IntAct" id="Q5VT06">
    <property type="interactions" value="109"/>
</dbReference>
<dbReference type="MINT" id="Q5VT06"/>
<dbReference type="STRING" id="9606.ENSP00000356579"/>
<dbReference type="GlyCosmos" id="Q5VT06">
    <property type="glycosylation" value="2 sites, 1 glycan"/>
</dbReference>
<dbReference type="GlyGen" id="Q5VT06">
    <property type="glycosylation" value="9 sites, 1 O-linked glycan (8 sites)"/>
</dbReference>
<dbReference type="iPTMnet" id="Q5VT06"/>
<dbReference type="PhosphoSitePlus" id="Q5VT06"/>
<dbReference type="BioMuta" id="CEP350"/>
<dbReference type="DMDM" id="74746869"/>
<dbReference type="jPOST" id="Q5VT06"/>
<dbReference type="MassIVE" id="Q5VT06"/>
<dbReference type="PaxDb" id="9606-ENSP00000356579"/>
<dbReference type="PeptideAtlas" id="Q5VT06"/>
<dbReference type="ProteomicsDB" id="65290"/>
<dbReference type="Pumba" id="Q5VT06"/>
<dbReference type="Antibodypedia" id="34424">
    <property type="antibodies" value="81 antibodies from 22 providers"/>
</dbReference>
<dbReference type="DNASU" id="9857"/>
<dbReference type="Ensembl" id="ENST00000367607.8">
    <property type="protein sequence ID" value="ENSP00000356579.3"/>
    <property type="gene ID" value="ENSG00000135837.18"/>
</dbReference>
<dbReference type="GeneID" id="9857"/>
<dbReference type="KEGG" id="hsa:9857"/>
<dbReference type="MANE-Select" id="ENST00000367607.8">
    <property type="protein sequence ID" value="ENSP00000356579.3"/>
    <property type="RefSeq nucleotide sequence ID" value="NM_014810.5"/>
    <property type="RefSeq protein sequence ID" value="NP_055625.4"/>
</dbReference>
<dbReference type="UCSC" id="uc001gnt.4">
    <property type="organism name" value="human"/>
</dbReference>
<dbReference type="AGR" id="HGNC:24238"/>
<dbReference type="CTD" id="9857"/>
<dbReference type="DisGeNET" id="9857"/>
<dbReference type="GeneCards" id="CEP350"/>
<dbReference type="HGNC" id="HGNC:24238">
    <property type="gene designation" value="CEP350"/>
</dbReference>
<dbReference type="HPA" id="ENSG00000135837">
    <property type="expression patterns" value="Low tissue specificity"/>
</dbReference>
<dbReference type="MIM" id="617870">
    <property type="type" value="gene"/>
</dbReference>
<dbReference type="neXtProt" id="NX_Q5VT06"/>
<dbReference type="OpenTargets" id="ENSG00000135837"/>
<dbReference type="PharmGKB" id="PA143485434"/>
<dbReference type="VEuPathDB" id="HostDB:ENSG00000135837"/>
<dbReference type="eggNOG" id="KOG4568">
    <property type="taxonomic scope" value="Eukaryota"/>
</dbReference>
<dbReference type="GeneTree" id="ENSGT00940000155130"/>
<dbReference type="HOGENOM" id="CLU_000421_0_0_1"/>
<dbReference type="InParanoid" id="Q5VT06"/>
<dbReference type="OMA" id="ESKHIYC"/>
<dbReference type="OrthoDB" id="306254at2759"/>
<dbReference type="PAN-GO" id="Q5VT06">
    <property type="GO annotations" value="0 GO annotations based on evolutionary models"/>
</dbReference>
<dbReference type="PhylomeDB" id="Q5VT06"/>
<dbReference type="TreeFam" id="TF329845"/>
<dbReference type="PathwayCommons" id="Q5VT06"/>
<dbReference type="SignaLink" id="Q5VT06"/>
<dbReference type="SIGNOR" id="Q5VT06"/>
<dbReference type="BioGRID-ORCS" id="9857">
    <property type="hits" value="77 hits in 1174 CRISPR screens"/>
</dbReference>
<dbReference type="CD-CODE" id="8C2F96ED">
    <property type="entry name" value="Centrosome"/>
</dbReference>
<dbReference type="ChiTaRS" id="CEP350">
    <property type="organism name" value="human"/>
</dbReference>
<dbReference type="EvolutionaryTrace" id="Q5VT06"/>
<dbReference type="GeneWiki" id="CEP350"/>
<dbReference type="GenomeRNAi" id="9857"/>
<dbReference type="Pharos" id="Q5VT06">
    <property type="development level" value="Tbio"/>
</dbReference>
<dbReference type="PRO" id="PR:Q5VT06"/>
<dbReference type="Proteomes" id="UP000005640">
    <property type="component" value="Chromosome 1"/>
</dbReference>
<dbReference type="RNAct" id="Q5VT06">
    <property type="molecule type" value="protein"/>
</dbReference>
<dbReference type="Bgee" id="ENSG00000135837">
    <property type="expression patterns" value="Expressed in sperm and 209 other cell types or tissues"/>
</dbReference>
<dbReference type="ExpressionAtlas" id="Q5VT06">
    <property type="expression patterns" value="baseline and differential"/>
</dbReference>
<dbReference type="GO" id="GO:0005814">
    <property type="term" value="C:centriole"/>
    <property type="evidence" value="ECO:0000314"/>
    <property type="project" value="UniProtKB"/>
</dbReference>
<dbReference type="GO" id="GO:0005813">
    <property type="term" value="C:centrosome"/>
    <property type="evidence" value="ECO:0000314"/>
    <property type="project" value="UniProtKB"/>
</dbReference>
<dbReference type="GO" id="GO:0036064">
    <property type="term" value="C:ciliary basal body"/>
    <property type="evidence" value="ECO:0000314"/>
    <property type="project" value="HPA"/>
</dbReference>
<dbReference type="GO" id="GO:0005829">
    <property type="term" value="C:cytosol"/>
    <property type="evidence" value="ECO:0000314"/>
    <property type="project" value="HPA"/>
</dbReference>
<dbReference type="GO" id="GO:0043231">
    <property type="term" value="C:intracellular membrane-bounded organelle"/>
    <property type="evidence" value="ECO:0000314"/>
    <property type="project" value="HPA"/>
</dbReference>
<dbReference type="GO" id="GO:0016020">
    <property type="term" value="C:membrane"/>
    <property type="evidence" value="ECO:0007005"/>
    <property type="project" value="UniProtKB"/>
</dbReference>
<dbReference type="GO" id="GO:0005654">
    <property type="term" value="C:nucleoplasm"/>
    <property type="evidence" value="ECO:0000314"/>
    <property type="project" value="HPA"/>
</dbReference>
<dbReference type="GO" id="GO:0005819">
    <property type="term" value="C:spindle"/>
    <property type="evidence" value="ECO:0007669"/>
    <property type="project" value="UniProtKB-SubCell"/>
</dbReference>
<dbReference type="GO" id="GO:0008017">
    <property type="term" value="F:microtubule binding"/>
    <property type="evidence" value="ECO:0007669"/>
    <property type="project" value="InterPro"/>
</dbReference>
<dbReference type="GO" id="GO:0034453">
    <property type="term" value="P:microtubule anchoring"/>
    <property type="evidence" value="ECO:0007669"/>
    <property type="project" value="InterPro"/>
</dbReference>
<dbReference type="GO" id="GO:1905515">
    <property type="term" value="P:non-motile cilium assembly"/>
    <property type="evidence" value="ECO:0007669"/>
    <property type="project" value="Ensembl"/>
</dbReference>
<dbReference type="GO" id="GO:0071539">
    <property type="term" value="P:protein localization to centrosome"/>
    <property type="evidence" value="ECO:0000314"/>
    <property type="project" value="UniProtKB"/>
</dbReference>
<dbReference type="FunFam" id="2.30.30.190:FF:000010">
    <property type="entry name" value="centrosome-associated protein 350 isoform X2"/>
    <property type="match status" value="1"/>
</dbReference>
<dbReference type="Gene3D" id="2.30.30.190">
    <property type="entry name" value="CAP Gly-rich-like domain"/>
    <property type="match status" value="1"/>
</dbReference>
<dbReference type="InterPro" id="IPR036859">
    <property type="entry name" value="CAP-Gly_dom_sf"/>
</dbReference>
<dbReference type="InterPro" id="IPR000938">
    <property type="entry name" value="CAP-Gly_domain"/>
</dbReference>
<dbReference type="InterPro" id="IPR028750">
    <property type="entry name" value="CEP350/CC187"/>
</dbReference>
<dbReference type="InterPro" id="IPR025486">
    <property type="entry name" value="DUF4378"/>
</dbReference>
<dbReference type="PANTHER" id="PTHR13958">
    <property type="entry name" value="CENTROSOME-ASSOCIATED PROTEIN 350"/>
    <property type="match status" value="1"/>
</dbReference>
<dbReference type="PANTHER" id="PTHR13958:SF4">
    <property type="entry name" value="CENTROSOME-ASSOCIATED PROTEIN 350"/>
    <property type="match status" value="1"/>
</dbReference>
<dbReference type="Pfam" id="PF01302">
    <property type="entry name" value="CAP_GLY"/>
    <property type="match status" value="1"/>
</dbReference>
<dbReference type="Pfam" id="PF14309">
    <property type="entry name" value="DUF4378"/>
    <property type="match status" value="1"/>
</dbReference>
<dbReference type="SMART" id="SM01052">
    <property type="entry name" value="CAP_GLY"/>
    <property type="match status" value="1"/>
</dbReference>
<dbReference type="SUPFAM" id="SSF74924">
    <property type="entry name" value="Cap-Gly domain"/>
    <property type="match status" value="1"/>
</dbReference>
<dbReference type="PROSITE" id="PS00845">
    <property type="entry name" value="CAP_GLY_1"/>
    <property type="match status" value="1"/>
</dbReference>
<dbReference type="PROSITE" id="PS50245">
    <property type="entry name" value="CAP_GLY_2"/>
    <property type="match status" value="1"/>
</dbReference>
<proteinExistence type="evidence at protein level"/>
<evidence type="ECO:0000250" key="1">
    <source>
        <dbReference type="UniProtKB" id="E9Q309"/>
    </source>
</evidence>
<evidence type="ECO:0000255" key="2"/>
<evidence type="ECO:0000255" key="3">
    <source>
        <dbReference type="PROSITE-ProRule" id="PRU00045"/>
    </source>
</evidence>
<evidence type="ECO:0000256" key="4">
    <source>
        <dbReference type="SAM" id="MobiDB-lite"/>
    </source>
</evidence>
<evidence type="ECO:0000269" key="5">
    <source>
    </source>
</evidence>
<evidence type="ECO:0000269" key="6">
    <source>
    </source>
</evidence>
<evidence type="ECO:0000269" key="7">
    <source>
    </source>
</evidence>
<evidence type="ECO:0000269" key="8">
    <source>
    </source>
</evidence>
<evidence type="ECO:0000269" key="9">
    <source>
    </source>
</evidence>
<evidence type="ECO:0000269" key="10">
    <source>
    </source>
</evidence>
<evidence type="ECO:0000269" key="11">
    <source>
    </source>
</evidence>
<evidence type="ECO:0000269" key="12">
    <source>
    </source>
</evidence>
<evidence type="ECO:0000269" key="13">
    <source>
    </source>
</evidence>
<evidence type="ECO:0000269" key="14">
    <source>
    </source>
</evidence>
<evidence type="ECO:0000269" key="15">
    <source>
    </source>
</evidence>
<evidence type="ECO:0000269" key="16">
    <source>
    </source>
</evidence>
<evidence type="ECO:0000269" key="17">
    <source ref="1"/>
</evidence>
<evidence type="ECO:0000303" key="18">
    <source>
    </source>
</evidence>
<evidence type="ECO:0000303" key="19">
    <source ref="1"/>
</evidence>
<evidence type="ECO:0000305" key="20"/>
<evidence type="ECO:0000312" key="21">
    <source>
        <dbReference type="HGNC" id="HGNC:24238"/>
    </source>
</evidence>
<evidence type="ECO:0007744" key="22">
    <source>
    </source>
</evidence>
<evidence type="ECO:0007744" key="23">
    <source>
    </source>
</evidence>
<evidence type="ECO:0007744" key="24">
    <source>
    </source>
</evidence>
<evidence type="ECO:0007744" key="25">
    <source>
    </source>
</evidence>
<evidence type="ECO:0007744" key="26">
    <source>
    </source>
</evidence>
<evidence type="ECO:0007829" key="27">
    <source>
        <dbReference type="PDB" id="2COZ"/>
    </source>
</evidence>
<sequence>MRSSKSKEVPLPNPRNSQSKDTVQADITTSWDALSQTKAALRHIENKLEVAPTSTAVCDSVMDTKKSSTSATRKISRKDGRYLDDSWVNAPISKSTKSRKEKSRSPLRATTLESNVKKNNRVEFREPLVSYREIHGAPSNFSSSHLESKHVYCVDVNEEKTESGNWMIGSREERNIRSCDFESSQSSVINDTVVRFLNDRPAIDALQNSECLIRMGASMRTEEEMPNRTKGSENNLKLSVNNMAHDTDPKALRLTDSSPSSTSTSNSQRLDILKRRQHDVKLEKLKERIRKQWEHSEETNGRGQKLGHIDHPVMVVNVDNSVTAKVRKVATAPPAPAYKGFNPSETKIRTPDGKVWQEAEFQNMSRELYRDLALHFADDISIKEKPAEKSKEKKVVKPVRKVQKVAQLSSTECRTGSSHLISTSSWRDGQKLVKKILGPAPRMEPKEQRTASSDRGGRERTAKSGGHIGRAESDPRLDVLHRHLQRNSERSRSKSRSENNIKKLASSLPDNKQEENTALNKDFLPIEIRGILDDLQLDSTAHTAKQDTVELQNQKSSAPVHAPRSHSPVKRKPDKITANEDPPVISKRRHYDTDEVRQYIVRQQEERKRKQNEEKKAQKEATEQKNKRLQELYRKQKEAFTKVKNVPPSEPSATRRLQETYSKLLLEKTLLEEPSHQHVTQETQAKPGYQPSGESDKENKVQERPPSASSSSDMSLSEPPQPLARKDLMESTWMQPERLSPQVHHSQPQPFAGTAGSLLSHLLSLEHVGILHKDFESILPTRKNHNMASRPLTFTPQPYVTSPAAYTDALLKPSASQYKSKLDRIEALKATAASLSSRIESEAKKLAGASINYGSAWNTEYDVQQAPQEDGPWTKAVTPPVKDDNEDVFSARIQKMLGSCVSHATFDDDLPGVGNLSEFKKLPEMIRPQSAISSFRVRSPGPKPEGLLAQLCKRQTDSSSSDMQACSQDKAKISLGSSIDSVSEGPLLSEGSLSEEEGDQDGQPLLKVAEILKEKEFCPGERNSYEPIKEFQKEAEKFLPLFGHIGGTQSKGPWEELAKGSPHSVINIFTKSYQLYGKGFEDKLDRGTSTSRPLNATATPLSGVSYEDDFVSSPGTGTSTEKKSTLEPHSTLSPQEDHSNRKSAYDPSSVDVTSQHSSGAQSAASSRSSTSSKGKKGKKEKTEWLDSFTGNVQNSLLDEEKAERGSHQGKKSGTSSKLSVKDFEQTLDTDSTLEDLSGHSVSVSSDKGRSQKTPTSPLSPSSQKSLQFDVAGTSSERSKSSVMPPTITGFKPNAPLTDLNPAASRTTTENMAPIPGSKRFSPAGLHHRMAAELSYLNAIEESVRQLSDVERVRGISLAQQESVSLAQIIKAQQQRHERDLALLKLKAEQEALESQRQLEETRNKAAQVHAESLQQVVQSQREVTEVLQEATCKIAAQQSETARLTTDAARQICEMAELTRTHISDAVVASGAPLAILYDHQRQHLPDFVKQLRTRTETDRKSPSVSLSQSKEGTLDSKHQKYSASYDSYSESSGYKNHDRRSSSGSSRQESPSVPSCKENEKKLNGEKIESSIDEQVQTAADDSLRSDSVPSLPDEKDSTSIATEYSLKFDESMTEDEIEEQSFRSLLPSESHRRFNMEKRRGHHDDSDEEASPEKTTLSTAKELNMPFSGGQDSFSKFTMEMVRQYMKEEEMRAAHQSSLLRLREKALKEKTKAELAWLEHQKKHLRDKGEDDKMPPLRKKQRGLLLRLQQEKAEIKRLQEANKAARKERQLILKQQEEIEKIRQTTIKLQEKLKSAGESKLDSHSDDDTKDNKATSPGPTDLETRSPSPISISSSETSSIMQKLKKMRSRMDEKFLTKREQKLMQRRQHAEELLEWKRRLDAEEAEIRQMEKQALAAWDKELIKPKTPKKELEDQRTEQKEIASEEESPVPLYSHLNSESSIPEELGSPAVEYVPSESIGQEQPGSPDHSILTEEMICSQELESSTSPSKHSLPKSCTSVSKQESSKGSHRTGGQCHLPIKSHQHCYSWSDESLSMTQSETTSDQSDIEGRIRALKDELRKRKSVVNQLKKEQKKRQKERLKAQEASLIKQLESYDEFIKKTEAELSQDLETSPTAKPQIKTLSSASEKPKIKPLTPLHRSETAKNWKSLTESERSRGSLESIAEHVDASLSGSERSVSERSLSAYAKRVNEWDSRTEDFQTPSPVLRSSRKIREESGDSLENVPALHLLKELNATSRILDMSDGKVGESSKKSEIKEIEYTKLKKSKIEDAFSKEGKSDVLLKLVLEQGDSSEILSKKDLPLDSENVQKDLVGLAIENLHKSEEMLKERQSDQDMNHSPNIQSGKDIHEQKNTKEKDLSWSEHLFAPKEIPYSEDFEVSSFKKEISAELYKDDFEVSSLLSLRKDSQSCRDKPQPMRSSTSGATSFGSNEEISECLSEKSLSIHSNVHSDRLLELKSPTELMKSKERSDVEHEQQVTESPSLASVPTADELFDFHIGDRVLIGNVQPGILRFKGETSFAKGFWAGVELDKPEGNNNGTYDGIAYFECKEKHGIFAPPQKISHIPENFDDYVDINEDEDCYSDERYQCYNQEQNDTEGPKDREKDVSEYFYEKSLPSVNDIEASVNRSRSLKIETDNVQDISGVLEAHVHQQSSVDSQISSKENKDLISDATEKVSIAAEDDTLDNTFSEELEKQQQFTEEEDNLYAEASEKLCTPLLDLLTREKNQLEAQLKSSLNEEKKSKQQLEKISLLTDSLLKVFVKDTVNQLQQIKKTRDEKIQLSNQELLGDDQKKVTPQDLSQNVEEQSPSISGCFLSSELEDEKEEISSPDMCPRPESPVFGASGQEELAKRLAELELSREFLSALGDDQDWFDEDFGLSSSHKIQKNKAEETIVPLMAEPKRVTQQPCETLLAVPHTAEEVEILVHNAAEELWKWKELGHDLHSISIPTKLLGCASKGLDIESTSKRVYKQAVFDLTKEIFEEIFAEDPNLNQPVWMKPCRINSSYFRRVKNPNNLDEIKSFIASEVLKLFSLKKEPNHKTDWQKMMKFGRKKRDRVDHILVQELHEEEAQWVNYDEDELCVKMQLADGIFETLIKDTIDVLNQISEKQGRMLLV</sequence>
<protein>
    <recommendedName>
        <fullName evidence="20">Centrosome-associated protein 350</fullName>
        <shortName>Cep350</shortName>
    </recommendedName>
    <alternativeName>
        <fullName evidence="19">Centrosome-associated protein of 350 kDa</fullName>
    </alternativeName>
</protein>
<accession>Q5VT06</accession>
<accession>O75068</accession>
<accession>Q8TDK3</accession>
<accession>Q8WY20</accession>
<organism>
    <name type="scientific">Homo sapiens</name>
    <name type="common">Human</name>
    <dbReference type="NCBI Taxonomy" id="9606"/>
    <lineage>
        <taxon>Eukaryota</taxon>
        <taxon>Metazoa</taxon>
        <taxon>Chordata</taxon>
        <taxon>Craniata</taxon>
        <taxon>Vertebrata</taxon>
        <taxon>Euteleostomi</taxon>
        <taxon>Mammalia</taxon>
        <taxon>Eutheria</taxon>
        <taxon>Euarchontoglires</taxon>
        <taxon>Primates</taxon>
        <taxon>Haplorrhini</taxon>
        <taxon>Catarrhini</taxon>
        <taxon>Hominidae</taxon>
        <taxon>Homo</taxon>
    </lineage>
</organism>